<dbReference type="EC" id="2.4.99.28" evidence="2"/>
<dbReference type="EC" id="3.4.16.4" evidence="2"/>
<dbReference type="EMBL" id="L42023">
    <property type="protein sequence ID" value="AAC23371.1"/>
    <property type="molecule type" value="Genomic_DNA"/>
</dbReference>
<dbReference type="PIR" id="D64138">
    <property type="entry name" value="D64138"/>
</dbReference>
<dbReference type="RefSeq" id="NP_439866.1">
    <property type="nucleotide sequence ID" value="NC_000907.1"/>
</dbReference>
<dbReference type="SMR" id="P45345"/>
<dbReference type="STRING" id="71421.HI_1725"/>
<dbReference type="CAZy" id="GT51">
    <property type="family name" value="Glycosyltransferase Family 51"/>
</dbReference>
<dbReference type="EnsemblBacteria" id="AAC23371">
    <property type="protein sequence ID" value="AAC23371"/>
    <property type="gene ID" value="HI_1725"/>
</dbReference>
<dbReference type="KEGG" id="hin:HI_1725"/>
<dbReference type="PATRIC" id="fig|71421.8.peg.1804"/>
<dbReference type="eggNOG" id="COG0744">
    <property type="taxonomic scope" value="Bacteria"/>
</dbReference>
<dbReference type="HOGENOM" id="CLU_006354_2_7_6"/>
<dbReference type="OrthoDB" id="9766909at2"/>
<dbReference type="PhylomeDB" id="P45345"/>
<dbReference type="BioCyc" id="HINF71421:G1GJ1-1740-MONOMER"/>
<dbReference type="UniPathway" id="UPA00219"/>
<dbReference type="Proteomes" id="UP000000579">
    <property type="component" value="Chromosome"/>
</dbReference>
<dbReference type="GO" id="GO:0030288">
    <property type="term" value="C:outer membrane-bounded periplasmic space"/>
    <property type="evidence" value="ECO:0000318"/>
    <property type="project" value="GO_Central"/>
</dbReference>
<dbReference type="GO" id="GO:0009274">
    <property type="term" value="C:peptidoglycan-based cell wall"/>
    <property type="evidence" value="ECO:0007669"/>
    <property type="project" value="InterPro"/>
</dbReference>
<dbReference type="GO" id="GO:0005886">
    <property type="term" value="C:plasma membrane"/>
    <property type="evidence" value="ECO:0007669"/>
    <property type="project" value="UniProtKB-SubCell"/>
</dbReference>
<dbReference type="GO" id="GO:0008658">
    <property type="term" value="F:penicillin binding"/>
    <property type="evidence" value="ECO:0007669"/>
    <property type="project" value="InterPro"/>
</dbReference>
<dbReference type="GO" id="GO:0008955">
    <property type="term" value="F:peptidoglycan glycosyltransferase activity"/>
    <property type="evidence" value="ECO:0000318"/>
    <property type="project" value="GO_Central"/>
</dbReference>
<dbReference type="GO" id="GO:0009002">
    <property type="term" value="F:serine-type D-Ala-D-Ala carboxypeptidase activity"/>
    <property type="evidence" value="ECO:0007669"/>
    <property type="project" value="UniProtKB-EC"/>
</dbReference>
<dbReference type="GO" id="GO:0071555">
    <property type="term" value="P:cell wall organization"/>
    <property type="evidence" value="ECO:0007669"/>
    <property type="project" value="UniProtKB-KW"/>
</dbReference>
<dbReference type="GO" id="GO:0009252">
    <property type="term" value="P:peptidoglycan biosynthetic process"/>
    <property type="evidence" value="ECO:0000318"/>
    <property type="project" value="GO_Central"/>
</dbReference>
<dbReference type="GO" id="GO:0006508">
    <property type="term" value="P:proteolysis"/>
    <property type="evidence" value="ECO:0007669"/>
    <property type="project" value="UniProtKB-KW"/>
</dbReference>
<dbReference type="GO" id="GO:0008360">
    <property type="term" value="P:regulation of cell shape"/>
    <property type="evidence" value="ECO:0007669"/>
    <property type="project" value="UniProtKB-KW"/>
</dbReference>
<dbReference type="GO" id="GO:0046677">
    <property type="term" value="P:response to antibiotic"/>
    <property type="evidence" value="ECO:0007669"/>
    <property type="project" value="UniProtKB-KW"/>
</dbReference>
<dbReference type="FunFam" id="1.10.3810.10:FF:000002">
    <property type="entry name" value="Penicillin-binding protein 1B"/>
    <property type="match status" value="1"/>
</dbReference>
<dbReference type="FunFam" id="3.40.710.10:FF:000006">
    <property type="entry name" value="Penicillin-binding protein 1B"/>
    <property type="match status" value="1"/>
</dbReference>
<dbReference type="Gene3D" id="1.10.3810.10">
    <property type="entry name" value="Biosynthetic peptidoglycan transglycosylase-like"/>
    <property type="match status" value="1"/>
</dbReference>
<dbReference type="Gene3D" id="1.20.5.100">
    <property type="entry name" value="Cytochrome c1, transmembrane anchor, C-terminal"/>
    <property type="match status" value="1"/>
</dbReference>
<dbReference type="Gene3D" id="3.40.710.10">
    <property type="entry name" value="DD-peptidase/beta-lactamase superfamily"/>
    <property type="match status" value="1"/>
</dbReference>
<dbReference type="Gene3D" id="3.30.2060.10">
    <property type="entry name" value="Penicillin-binding protein 1b domain"/>
    <property type="match status" value="1"/>
</dbReference>
<dbReference type="InterPro" id="IPR012338">
    <property type="entry name" value="Beta-lactam/transpept-like"/>
</dbReference>
<dbReference type="InterPro" id="IPR001264">
    <property type="entry name" value="Glyco_trans_51"/>
</dbReference>
<dbReference type="InterPro" id="IPR050396">
    <property type="entry name" value="Glycosyltr_51/Transpeptidase"/>
</dbReference>
<dbReference type="InterPro" id="IPR023346">
    <property type="entry name" value="Lysozyme-like_dom_sf"/>
</dbReference>
<dbReference type="InterPro" id="IPR011813">
    <property type="entry name" value="PBP_1b"/>
</dbReference>
<dbReference type="InterPro" id="IPR036950">
    <property type="entry name" value="PBP_transglycosylase"/>
</dbReference>
<dbReference type="InterPro" id="IPR001460">
    <property type="entry name" value="PCN-bd_Tpept"/>
</dbReference>
<dbReference type="InterPro" id="IPR028166">
    <property type="entry name" value="UB2H"/>
</dbReference>
<dbReference type="NCBIfam" id="TIGR02074">
    <property type="entry name" value="PBP_1a_fam"/>
    <property type="match status" value="1"/>
</dbReference>
<dbReference type="NCBIfam" id="TIGR02071">
    <property type="entry name" value="PBP_1b"/>
    <property type="match status" value="1"/>
</dbReference>
<dbReference type="PANTHER" id="PTHR32282">
    <property type="entry name" value="BINDING PROTEIN TRANSPEPTIDASE, PUTATIVE-RELATED"/>
    <property type="match status" value="1"/>
</dbReference>
<dbReference type="PANTHER" id="PTHR32282:SF11">
    <property type="entry name" value="PENICILLIN-BINDING PROTEIN 1B"/>
    <property type="match status" value="1"/>
</dbReference>
<dbReference type="Pfam" id="PF00912">
    <property type="entry name" value="Transgly"/>
    <property type="match status" value="1"/>
</dbReference>
<dbReference type="Pfam" id="PF00905">
    <property type="entry name" value="Transpeptidase"/>
    <property type="match status" value="1"/>
</dbReference>
<dbReference type="Pfam" id="PF14814">
    <property type="entry name" value="UB2H"/>
    <property type="match status" value="1"/>
</dbReference>
<dbReference type="PIRSF" id="PIRSF002799">
    <property type="entry name" value="PBP_1b"/>
    <property type="match status" value="1"/>
</dbReference>
<dbReference type="SUPFAM" id="SSF56601">
    <property type="entry name" value="beta-lactamase/transpeptidase-like"/>
    <property type="match status" value="1"/>
</dbReference>
<dbReference type="SUPFAM" id="SSF53955">
    <property type="entry name" value="Lysozyme-like"/>
    <property type="match status" value="1"/>
</dbReference>
<feature type="chain" id="PRO_0000083184" description="Penicillin-binding protein 1B">
    <location>
        <begin position="1"/>
        <end position="781"/>
    </location>
</feature>
<feature type="region of interest" description="Transglycosylase">
    <location>
        <begin position="151"/>
        <end position="322"/>
    </location>
</feature>
<feature type="region of interest" description="Transpeptidase">
    <location>
        <begin position="415"/>
        <end position="702"/>
    </location>
</feature>
<feature type="region of interest" description="Disordered" evidence="3">
    <location>
        <begin position="749"/>
        <end position="781"/>
    </location>
</feature>
<feature type="compositionally biased region" description="Low complexity" evidence="3">
    <location>
        <begin position="749"/>
        <end position="768"/>
    </location>
</feature>
<feature type="active site" description="Proton donor; for transglycosylase activity" evidence="2">
    <location>
        <position position="188"/>
    </location>
</feature>
<feature type="active site" description="Acyl-ester intermediate; for transpeptidase activity" evidence="2">
    <location>
        <position position="466"/>
    </location>
</feature>
<gene>
    <name type="primary">mrcB</name>
    <name type="synonym">ponB</name>
    <name type="ordered locus">HI_1725</name>
</gene>
<sequence>MTSQHSAKKSSKNTPKNNRTFKGFLLKFSFTALVLTIFYGGYLDWQIRSKMDGQIWHLPAEVYSRLESVKIADNLAFDEVIQILLDNEYRQTTMVAAPGDFKLEDDSIVVLRRAFPFPDKAEPQRVLRLRFSHNKLSRIEDLVTVKTVDEFRLAPKLIAMLQSDNEDRLAIPLQNYPRLLIDTLILTEDRRFYEHNGINPVGILRALIANIRAGQTVQGGSTLTQQLVKNLFLSRERTITRKANEALMSLVLDWRYDKNRILETYLNEIYLGQNGDTQIHGFELASQFYFGRSIREISLDQIALLVGMVKGPSLYNPWRNPQNALERRNIVLRLMLEHKMIGDELYQLLSQRPLGVQKKGQISRKYPAFIQTLQADLRRKLGEHKISSLLGARIFSTMDLKQQAQAENAVGNTVSQLQLKMKNPHLEGAMIITDYRTGEIRAVVGGLQTQYAGFNRALMAKRQIGSLVKPSIYLTALSNPEQFRLNTPINNQPITINVKGSPPWQPRNYDKKYSDSVMLMDALARSLNIPTVNIGMKVGLSKVIDTQKAMGWDNVEIPKVPAMLLGSYTISPYDVTKLYQTLANQGGRIALTTVDSIADRQGNLIFQHDKSAKQVVPQEAAFQTLFAMQQTVERGTARSLQKDYADLHLAGKTGTTNESRDTWFVGIDGKNISTVWLGRDDNGETKLTGASGALQIYKDYLNRTNIEKLAITPPTTVKWVGINQYGDWDCESYRTIPIWLNNGQNFCGETSSPSLTPTTETETPPQESLWDVLDNPNPPAQ</sequence>
<name>PBPB_HAEIN</name>
<protein>
    <recommendedName>
        <fullName>Penicillin-binding protein 1B</fullName>
        <shortName>PBP-1b</shortName>
        <shortName>PBP1b</shortName>
    </recommendedName>
    <alternativeName>
        <fullName>Murein polymerase</fullName>
    </alternativeName>
    <domain>
        <recommendedName>
            <fullName>Penicillin-insensitive transglycosylase</fullName>
            <ecNumber evidence="2">2.4.99.28</ecNumber>
        </recommendedName>
        <alternativeName>
            <fullName>Peptidoglycan TGase</fullName>
        </alternativeName>
        <alternativeName>
            <fullName>Peptidoglycan glycosyltransferase</fullName>
        </alternativeName>
    </domain>
    <domain>
        <recommendedName>
            <fullName>Penicillin-sensitive transpeptidase</fullName>
            <ecNumber evidence="2">3.4.16.4</ecNumber>
        </recommendedName>
        <alternativeName>
            <fullName>DD-transpeptidase</fullName>
        </alternativeName>
    </domain>
</protein>
<keyword id="KW-0046">Antibiotic resistance</keyword>
<keyword id="KW-0121">Carboxypeptidase</keyword>
<keyword id="KW-0997">Cell inner membrane</keyword>
<keyword id="KW-1003">Cell membrane</keyword>
<keyword id="KW-0133">Cell shape</keyword>
<keyword id="KW-0961">Cell wall biogenesis/degradation</keyword>
<keyword id="KW-0328">Glycosyltransferase</keyword>
<keyword id="KW-0378">Hydrolase</keyword>
<keyword id="KW-0472">Membrane</keyword>
<keyword id="KW-0511">Multifunctional enzyme</keyword>
<keyword id="KW-0573">Peptidoglycan synthesis</keyword>
<keyword id="KW-0645">Protease</keyword>
<keyword id="KW-1185">Reference proteome</keyword>
<keyword id="KW-0808">Transferase</keyword>
<comment type="function">
    <text evidence="1">Cell wall formation. Synthesis of cross-linked peptidoglycan from the lipid intermediates. The enzyme has a penicillin-insensitive transglycosylase N-terminal domain (formation of linear glycan strands) and a penicillin-sensitive transpeptidase C-terminal domain (cross-linking of the peptide subunits) (By similarity).</text>
</comment>
<comment type="catalytic activity">
    <reaction evidence="2">
        <text>[GlcNAc-(1-&gt;4)-Mur2Ac(oyl-L-Ala-gamma-D-Glu-L-Lys-D-Ala-D-Ala)](n)-di-trans,octa-cis-undecaprenyl diphosphate + beta-D-GlcNAc-(1-&gt;4)-Mur2Ac(oyl-L-Ala-gamma-D-Glu-L-Lys-D-Ala-D-Ala)-di-trans,octa-cis-undecaprenyl diphosphate = [GlcNAc-(1-&gt;4)-Mur2Ac(oyl-L-Ala-gamma-D-Glu-L-Lys-D-Ala-D-Ala)](n+1)-di-trans,octa-cis-undecaprenyl diphosphate + di-trans,octa-cis-undecaprenyl diphosphate + H(+)</text>
        <dbReference type="Rhea" id="RHEA:23708"/>
        <dbReference type="Rhea" id="RHEA-COMP:9602"/>
        <dbReference type="Rhea" id="RHEA-COMP:9603"/>
        <dbReference type="ChEBI" id="CHEBI:15378"/>
        <dbReference type="ChEBI" id="CHEBI:58405"/>
        <dbReference type="ChEBI" id="CHEBI:60033"/>
        <dbReference type="ChEBI" id="CHEBI:78435"/>
        <dbReference type="EC" id="2.4.99.28"/>
    </reaction>
</comment>
<comment type="catalytic activity">
    <reaction evidence="2">
        <text>Preferential cleavage: (Ac)2-L-Lys-D-Ala-|-D-Ala. Also transpeptidation of peptidyl-alanyl moieties that are N-acyl substituents of D-alanine.</text>
        <dbReference type="EC" id="3.4.16.4"/>
    </reaction>
</comment>
<comment type="pathway">
    <text>Cell wall biogenesis; peptidoglycan biosynthesis.</text>
</comment>
<comment type="subcellular location">
    <subcellularLocation>
        <location evidence="1">Cell inner membrane</location>
    </subcellularLocation>
</comment>
<comment type="similarity">
    <text evidence="4">In the N-terminal section; belongs to the glycosyltransferase 51 family.</text>
</comment>
<comment type="similarity">
    <text evidence="4">In the C-terminal section; belongs to the transpeptidase family.</text>
</comment>
<reference key="1">
    <citation type="journal article" date="1995" name="Science">
        <title>Whole-genome random sequencing and assembly of Haemophilus influenzae Rd.</title>
        <authorList>
            <person name="Fleischmann R.D."/>
            <person name="Adams M.D."/>
            <person name="White O."/>
            <person name="Clayton R.A."/>
            <person name="Kirkness E.F."/>
            <person name="Kerlavage A.R."/>
            <person name="Bult C.J."/>
            <person name="Tomb J.-F."/>
            <person name="Dougherty B.A."/>
            <person name="Merrick J.M."/>
            <person name="McKenney K."/>
            <person name="Sutton G.G."/>
            <person name="FitzHugh W."/>
            <person name="Fields C.A."/>
            <person name="Gocayne J.D."/>
            <person name="Scott J.D."/>
            <person name="Shirley R."/>
            <person name="Liu L.-I."/>
            <person name="Glodek A."/>
            <person name="Kelley J.M."/>
            <person name="Weidman J.F."/>
            <person name="Phillips C.A."/>
            <person name="Spriggs T."/>
            <person name="Hedblom E."/>
            <person name="Cotton M.D."/>
            <person name="Utterback T.R."/>
            <person name="Hanna M.C."/>
            <person name="Nguyen D.T."/>
            <person name="Saudek D.M."/>
            <person name="Brandon R.C."/>
            <person name="Fine L.D."/>
            <person name="Fritchman J.L."/>
            <person name="Fuhrmann J.L."/>
            <person name="Geoghagen N.S.M."/>
            <person name="Gnehm C.L."/>
            <person name="McDonald L.A."/>
            <person name="Small K.V."/>
            <person name="Fraser C.M."/>
            <person name="Smith H.O."/>
            <person name="Venter J.C."/>
        </authorList>
    </citation>
    <scope>NUCLEOTIDE SEQUENCE [LARGE SCALE GENOMIC DNA]</scope>
    <source>
        <strain>ATCC 51907 / DSM 11121 / KW20 / Rd</strain>
    </source>
</reference>
<evidence type="ECO:0000250" key="1"/>
<evidence type="ECO:0000250" key="2">
    <source>
        <dbReference type="UniProtKB" id="P02919"/>
    </source>
</evidence>
<evidence type="ECO:0000256" key="3">
    <source>
        <dbReference type="SAM" id="MobiDB-lite"/>
    </source>
</evidence>
<evidence type="ECO:0000305" key="4"/>
<proteinExistence type="inferred from homology"/>
<accession>P45345</accession>
<organism>
    <name type="scientific">Haemophilus influenzae (strain ATCC 51907 / DSM 11121 / KW20 / Rd)</name>
    <dbReference type="NCBI Taxonomy" id="71421"/>
    <lineage>
        <taxon>Bacteria</taxon>
        <taxon>Pseudomonadati</taxon>
        <taxon>Pseudomonadota</taxon>
        <taxon>Gammaproteobacteria</taxon>
        <taxon>Pasteurellales</taxon>
        <taxon>Pasteurellaceae</taxon>
        <taxon>Haemophilus</taxon>
    </lineage>
</organism>